<feature type="chain" id="PRO_0000100821" description="Phosphoribosylaminoimidazole-succinocarboxamide synthase">
    <location>
        <begin position="1"/>
        <end position="304"/>
    </location>
</feature>
<protein>
    <recommendedName>
        <fullName evidence="1">Phosphoribosylaminoimidazole-succinocarboxamide synthase</fullName>
        <ecNumber evidence="1">6.3.2.6</ecNumber>
    </recommendedName>
    <alternativeName>
        <fullName evidence="1">SAICAR synthetase</fullName>
    </alternativeName>
</protein>
<name>PUR7_COREF</name>
<sequence length="304" mass="33767">MGLDSPDMRPELSQYKHLSAGKVREIYEIDEHHILMVASDRISAYDFILDTEIPDKGRVLTAMSQFFFDAIDFPNHLAGPIDDPRIPEEVLGRAMVCKKLAMMPFECVVRGYLTGSGLEEYRQTGTVCGITLPEGLVESSRLPEPIFTPATKADVGDHDINVSFDVVEERLGEARANQLRDASIAIYSRAAEIALERGVILADTKFEFGLDENGELVLGDEVLTPDSSRYWPAEGYEAGHVQPSFDKQYVRNWLTGPKSGWDKNSGVQPPALPGSVVEATRERYIEAYELISGNKFSTWIGCCV</sequence>
<gene>
    <name evidence="1" type="primary">purC</name>
    <name type="ordered locus">CE2487</name>
</gene>
<evidence type="ECO:0000255" key="1">
    <source>
        <dbReference type="HAMAP-Rule" id="MF_00137"/>
    </source>
</evidence>
<reference key="1">
    <citation type="journal article" date="2003" name="Genome Res.">
        <title>Comparative complete genome sequence analysis of the amino acid replacements responsible for the thermostability of Corynebacterium efficiens.</title>
        <authorList>
            <person name="Nishio Y."/>
            <person name="Nakamura Y."/>
            <person name="Kawarabayasi Y."/>
            <person name="Usuda Y."/>
            <person name="Kimura E."/>
            <person name="Sugimoto S."/>
            <person name="Matsui K."/>
            <person name="Yamagishi A."/>
            <person name="Kikuchi H."/>
            <person name="Ikeo K."/>
            <person name="Gojobori T."/>
        </authorList>
    </citation>
    <scope>NUCLEOTIDE SEQUENCE [LARGE SCALE GENOMIC DNA]</scope>
    <source>
        <strain>DSM 44549 / YS-314 / AJ 12310 / JCM 11189 / NBRC 100395</strain>
    </source>
</reference>
<organism>
    <name type="scientific">Corynebacterium efficiens (strain DSM 44549 / YS-314 / AJ 12310 / JCM 11189 / NBRC 100395)</name>
    <dbReference type="NCBI Taxonomy" id="196164"/>
    <lineage>
        <taxon>Bacteria</taxon>
        <taxon>Bacillati</taxon>
        <taxon>Actinomycetota</taxon>
        <taxon>Actinomycetes</taxon>
        <taxon>Mycobacteriales</taxon>
        <taxon>Corynebacteriaceae</taxon>
        <taxon>Corynebacterium</taxon>
    </lineage>
</organism>
<comment type="catalytic activity">
    <reaction evidence="1">
        <text>5-amino-1-(5-phospho-D-ribosyl)imidazole-4-carboxylate + L-aspartate + ATP = (2S)-2-[5-amino-1-(5-phospho-beta-D-ribosyl)imidazole-4-carboxamido]succinate + ADP + phosphate + 2 H(+)</text>
        <dbReference type="Rhea" id="RHEA:22628"/>
        <dbReference type="ChEBI" id="CHEBI:15378"/>
        <dbReference type="ChEBI" id="CHEBI:29991"/>
        <dbReference type="ChEBI" id="CHEBI:30616"/>
        <dbReference type="ChEBI" id="CHEBI:43474"/>
        <dbReference type="ChEBI" id="CHEBI:58443"/>
        <dbReference type="ChEBI" id="CHEBI:77657"/>
        <dbReference type="ChEBI" id="CHEBI:456216"/>
        <dbReference type="EC" id="6.3.2.6"/>
    </reaction>
</comment>
<comment type="pathway">
    <text evidence="1">Purine metabolism; IMP biosynthesis via de novo pathway; 5-amino-1-(5-phospho-D-ribosyl)imidazole-4-carboxamide from 5-amino-1-(5-phospho-D-ribosyl)imidazole-4-carboxylate: step 1/2.</text>
</comment>
<comment type="similarity">
    <text evidence="1">Belongs to the SAICAR synthetase family.</text>
</comment>
<dbReference type="EC" id="6.3.2.6" evidence="1"/>
<dbReference type="EMBL" id="BA000035">
    <property type="protein sequence ID" value="BAC19297.1"/>
    <property type="molecule type" value="Genomic_DNA"/>
</dbReference>
<dbReference type="SMR" id="Q8FML6"/>
<dbReference type="STRING" id="196164.gene:10742933"/>
<dbReference type="KEGG" id="cef:CE2487"/>
<dbReference type="eggNOG" id="COG0152">
    <property type="taxonomic scope" value="Bacteria"/>
</dbReference>
<dbReference type="HOGENOM" id="CLU_045637_0_0_11"/>
<dbReference type="UniPathway" id="UPA00074">
    <property type="reaction ID" value="UER00131"/>
</dbReference>
<dbReference type="Proteomes" id="UP000001409">
    <property type="component" value="Chromosome"/>
</dbReference>
<dbReference type="GO" id="GO:0005737">
    <property type="term" value="C:cytoplasm"/>
    <property type="evidence" value="ECO:0007669"/>
    <property type="project" value="TreeGrafter"/>
</dbReference>
<dbReference type="GO" id="GO:0005524">
    <property type="term" value="F:ATP binding"/>
    <property type="evidence" value="ECO:0007669"/>
    <property type="project" value="UniProtKB-KW"/>
</dbReference>
<dbReference type="GO" id="GO:0004639">
    <property type="term" value="F:phosphoribosylaminoimidazolesuccinocarboxamide synthase activity"/>
    <property type="evidence" value="ECO:0007669"/>
    <property type="project" value="UniProtKB-UniRule"/>
</dbReference>
<dbReference type="GO" id="GO:0006189">
    <property type="term" value="P:'de novo' IMP biosynthetic process"/>
    <property type="evidence" value="ECO:0007669"/>
    <property type="project" value="UniProtKB-UniRule"/>
</dbReference>
<dbReference type="CDD" id="cd01414">
    <property type="entry name" value="SAICAR_synt_Sc"/>
    <property type="match status" value="1"/>
</dbReference>
<dbReference type="FunFam" id="3.30.470.20:FF:000015">
    <property type="entry name" value="Phosphoribosylaminoimidazole-succinocarboxamide synthase"/>
    <property type="match status" value="1"/>
</dbReference>
<dbReference type="Gene3D" id="3.30.470.20">
    <property type="entry name" value="ATP-grasp fold, B domain"/>
    <property type="match status" value="1"/>
</dbReference>
<dbReference type="Gene3D" id="3.30.200.20">
    <property type="entry name" value="Phosphorylase Kinase, domain 1"/>
    <property type="match status" value="1"/>
</dbReference>
<dbReference type="HAMAP" id="MF_00137">
    <property type="entry name" value="SAICAR_synth"/>
    <property type="match status" value="1"/>
</dbReference>
<dbReference type="InterPro" id="IPR028923">
    <property type="entry name" value="SAICAR_synt/ADE2_N"/>
</dbReference>
<dbReference type="InterPro" id="IPR001636">
    <property type="entry name" value="SAICAR_synth"/>
</dbReference>
<dbReference type="InterPro" id="IPR018236">
    <property type="entry name" value="SAICAR_synthetase_CS"/>
</dbReference>
<dbReference type="NCBIfam" id="NF010568">
    <property type="entry name" value="PRK13961.1"/>
    <property type="match status" value="1"/>
</dbReference>
<dbReference type="NCBIfam" id="TIGR00081">
    <property type="entry name" value="purC"/>
    <property type="match status" value="1"/>
</dbReference>
<dbReference type="PANTHER" id="PTHR43700">
    <property type="entry name" value="PHOSPHORIBOSYLAMINOIMIDAZOLE-SUCCINOCARBOXAMIDE SYNTHASE"/>
    <property type="match status" value="1"/>
</dbReference>
<dbReference type="PANTHER" id="PTHR43700:SF1">
    <property type="entry name" value="PHOSPHORIBOSYLAMINOIMIDAZOLE-SUCCINOCARBOXAMIDE SYNTHASE"/>
    <property type="match status" value="1"/>
</dbReference>
<dbReference type="Pfam" id="PF01259">
    <property type="entry name" value="SAICAR_synt"/>
    <property type="match status" value="1"/>
</dbReference>
<dbReference type="SUPFAM" id="SSF56104">
    <property type="entry name" value="SAICAR synthase-like"/>
    <property type="match status" value="1"/>
</dbReference>
<dbReference type="PROSITE" id="PS01058">
    <property type="entry name" value="SAICAR_SYNTHETASE_2"/>
    <property type="match status" value="1"/>
</dbReference>
<proteinExistence type="inferred from homology"/>
<keyword id="KW-0067">ATP-binding</keyword>
<keyword id="KW-0436">Ligase</keyword>
<keyword id="KW-0547">Nucleotide-binding</keyword>
<keyword id="KW-0658">Purine biosynthesis</keyword>
<keyword id="KW-1185">Reference proteome</keyword>
<accession>Q8FML6</accession>